<proteinExistence type="evidence at transcript level"/>
<comment type="function">
    <text evidence="4">Acts as a GTPase activator for the Rac-type GTPase by converting it to an inactive GDP-bound state. Acts as a negative feedback regulator in tolerance to oxygen deprivation which requires ARAC4/ROP2.</text>
</comment>
<comment type="induction">
    <text evidence="4">By oxygen deprivation.</text>
</comment>
<comment type="disruption phenotype">
    <text evidence="4">No visible phenotype under normal growth conditions, but mutant plants have increased sensitivity to stresses induced by oxygen deprivation.</text>
</comment>
<feature type="chain" id="PRO_0000422719" description="Rho GTPase-activating protein 4">
    <location>
        <begin position="1"/>
        <end position="435"/>
    </location>
</feature>
<feature type="domain" description="CRIB" evidence="1">
    <location>
        <begin position="93"/>
        <end position="106"/>
    </location>
</feature>
<feature type="domain" description="Rho-GAP" evidence="2">
    <location>
        <begin position="138"/>
        <end position="319"/>
    </location>
</feature>
<feature type="region of interest" description="Disordered" evidence="3">
    <location>
        <begin position="1"/>
        <end position="59"/>
    </location>
</feature>
<feature type="region of interest" description="Disordered" evidence="3">
    <location>
        <begin position="321"/>
        <end position="343"/>
    </location>
</feature>
<feature type="compositionally biased region" description="Low complexity" evidence="3">
    <location>
        <begin position="7"/>
        <end position="23"/>
    </location>
</feature>
<feature type="site" description="Arginine finger; crucial for GTP hydrolysis by stabilizing the transition state" evidence="2">
    <location>
        <position position="178"/>
    </location>
</feature>
<accession>Q9CAX8</accession>
<gene>
    <name type="primary">ROPGAP4</name>
    <name type="ordered locus">At3g11490</name>
    <name type="ORF">F24K9.16</name>
</gene>
<organism>
    <name type="scientific">Arabidopsis thaliana</name>
    <name type="common">Mouse-ear cress</name>
    <dbReference type="NCBI Taxonomy" id="3702"/>
    <lineage>
        <taxon>Eukaryota</taxon>
        <taxon>Viridiplantae</taxon>
        <taxon>Streptophyta</taxon>
        <taxon>Embryophyta</taxon>
        <taxon>Tracheophyta</taxon>
        <taxon>Spermatophyta</taxon>
        <taxon>Magnoliopsida</taxon>
        <taxon>eudicotyledons</taxon>
        <taxon>Gunneridae</taxon>
        <taxon>Pentapetalae</taxon>
        <taxon>rosids</taxon>
        <taxon>malvids</taxon>
        <taxon>Brassicales</taxon>
        <taxon>Brassicaceae</taxon>
        <taxon>Camelineae</taxon>
        <taxon>Arabidopsis</taxon>
    </lineage>
</organism>
<name>RGAP4_ARATH</name>
<protein>
    <recommendedName>
        <fullName>Rho GTPase-activating protein 4</fullName>
    </recommendedName>
    <alternativeName>
        <fullName>Rho-type GTPase-activating protein 4</fullName>
    </alternativeName>
</protein>
<keyword id="KW-0343">GTPase activation</keyword>
<keyword id="KW-1185">Reference proteome</keyword>
<keyword id="KW-0346">Stress response</keyword>
<reference key="1">
    <citation type="journal article" date="2000" name="Nature">
        <title>Sequence and analysis of chromosome 3 of the plant Arabidopsis thaliana.</title>
        <authorList>
            <person name="Salanoubat M."/>
            <person name="Lemcke K."/>
            <person name="Rieger M."/>
            <person name="Ansorge W."/>
            <person name="Unseld M."/>
            <person name="Fartmann B."/>
            <person name="Valle G."/>
            <person name="Bloecker H."/>
            <person name="Perez-Alonso M."/>
            <person name="Obermaier B."/>
            <person name="Delseny M."/>
            <person name="Boutry M."/>
            <person name="Grivell L.A."/>
            <person name="Mache R."/>
            <person name="Puigdomenech P."/>
            <person name="De Simone V."/>
            <person name="Choisne N."/>
            <person name="Artiguenave F."/>
            <person name="Robert C."/>
            <person name="Brottier P."/>
            <person name="Wincker P."/>
            <person name="Cattolico L."/>
            <person name="Weissenbach J."/>
            <person name="Saurin W."/>
            <person name="Quetier F."/>
            <person name="Schaefer M."/>
            <person name="Mueller-Auer S."/>
            <person name="Gabel C."/>
            <person name="Fuchs M."/>
            <person name="Benes V."/>
            <person name="Wurmbach E."/>
            <person name="Drzonek H."/>
            <person name="Erfle H."/>
            <person name="Jordan N."/>
            <person name="Bangert S."/>
            <person name="Wiedelmann R."/>
            <person name="Kranz H."/>
            <person name="Voss H."/>
            <person name="Holland R."/>
            <person name="Brandt P."/>
            <person name="Nyakatura G."/>
            <person name="Vezzi A."/>
            <person name="D'Angelo M."/>
            <person name="Pallavicini A."/>
            <person name="Toppo S."/>
            <person name="Simionati B."/>
            <person name="Conrad A."/>
            <person name="Hornischer K."/>
            <person name="Kauer G."/>
            <person name="Loehnert T.-H."/>
            <person name="Nordsiek G."/>
            <person name="Reichelt J."/>
            <person name="Scharfe M."/>
            <person name="Schoen O."/>
            <person name="Bargues M."/>
            <person name="Terol J."/>
            <person name="Climent J."/>
            <person name="Navarro P."/>
            <person name="Collado C."/>
            <person name="Perez-Perez A."/>
            <person name="Ottenwaelder B."/>
            <person name="Duchemin D."/>
            <person name="Cooke R."/>
            <person name="Laudie M."/>
            <person name="Berger-Llauro C."/>
            <person name="Purnelle B."/>
            <person name="Masuy D."/>
            <person name="de Haan M."/>
            <person name="Maarse A.C."/>
            <person name="Alcaraz J.-P."/>
            <person name="Cottet A."/>
            <person name="Casacuberta E."/>
            <person name="Monfort A."/>
            <person name="Argiriou A."/>
            <person name="Flores M."/>
            <person name="Liguori R."/>
            <person name="Vitale D."/>
            <person name="Mannhaupt G."/>
            <person name="Haase D."/>
            <person name="Schoof H."/>
            <person name="Rudd S."/>
            <person name="Zaccaria P."/>
            <person name="Mewes H.-W."/>
            <person name="Mayer K.F.X."/>
            <person name="Kaul S."/>
            <person name="Town C.D."/>
            <person name="Koo H.L."/>
            <person name="Tallon L.J."/>
            <person name="Jenkins J."/>
            <person name="Rooney T."/>
            <person name="Rizzo M."/>
            <person name="Walts A."/>
            <person name="Utterback T."/>
            <person name="Fujii C.Y."/>
            <person name="Shea T.P."/>
            <person name="Creasy T.H."/>
            <person name="Haas B."/>
            <person name="Maiti R."/>
            <person name="Wu D."/>
            <person name="Peterson J."/>
            <person name="Van Aken S."/>
            <person name="Pai G."/>
            <person name="Militscher J."/>
            <person name="Sellers P."/>
            <person name="Gill J.E."/>
            <person name="Feldblyum T.V."/>
            <person name="Preuss D."/>
            <person name="Lin X."/>
            <person name="Nierman W.C."/>
            <person name="Salzberg S.L."/>
            <person name="White O."/>
            <person name="Venter J.C."/>
            <person name="Fraser C.M."/>
            <person name="Kaneko T."/>
            <person name="Nakamura Y."/>
            <person name="Sato S."/>
            <person name="Kato T."/>
            <person name="Asamizu E."/>
            <person name="Sasamoto S."/>
            <person name="Kimura T."/>
            <person name="Idesawa K."/>
            <person name="Kawashima K."/>
            <person name="Kishida Y."/>
            <person name="Kiyokawa C."/>
            <person name="Kohara M."/>
            <person name="Matsumoto M."/>
            <person name="Matsuno A."/>
            <person name="Muraki A."/>
            <person name="Nakayama S."/>
            <person name="Nakazaki N."/>
            <person name="Shinpo S."/>
            <person name="Takeuchi C."/>
            <person name="Wada T."/>
            <person name="Watanabe A."/>
            <person name="Yamada M."/>
            <person name="Yasuda M."/>
            <person name="Tabata S."/>
        </authorList>
    </citation>
    <scope>NUCLEOTIDE SEQUENCE [LARGE SCALE GENOMIC DNA]</scope>
    <source>
        <strain>cv. Columbia</strain>
    </source>
</reference>
<reference key="2">
    <citation type="journal article" date="2017" name="Plant J.">
        <title>Araport11: a complete reannotation of the Arabidopsis thaliana reference genome.</title>
        <authorList>
            <person name="Cheng C.Y."/>
            <person name="Krishnakumar V."/>
            <person name="Chan A.P."/>
            <person name="Thibaud-Nissen F."/>
            <person name="Schobel S."/>
            <person name="Town C.D."/>
        </authorList>
    </citation>
    <scope>GENOME REANNOTATION</scope>
    <source>
        <strain>cv. Columbia</strain>
    </source>
</reference>
<reference key="3">
    <citation type="journal article" date="2002" name="Science">
        <title>RopGAP4-dependent Rop GTPase rheostat control of Arabidopsis oxygen deprivation tolerance.</title>
        <authorList>
            <person name="Baxter-Burrell A."/>
            <person name="Yang Z."/>
            <person name="Springer P.S."/>
            <person name="Bailey-Serres J."/>
        </authorList>
    </citation>
    <scope>FUNCTION</scope>
    <scope>INDUCTION</scope>
    <scope>DISRUPTION PHENOTYPE</scope>
    <source>
        <strain>cv. Wassilewskija</strain>
    </source>
</reference>
<dbReference type="EMBL" id="AC008153">
    <property type="protein sequence ID" value="AAG51449.1"/>
    <property type="molecule type" value="Genomic_DNA"/>
</dbReference>
<dbReference type="EMBL" id="CP002686">
    <property type="protein sequence ID" value="AEE75054.1"/>
    <property type="molecule type" value="Genomic_DNA"/>
</dbReference>
<dbReference type="RefSeq" id="NP_187756.1">
    <property type="nucleotide sequence ID" value="NM_111982.2"/>
</dbReference>
<dbReference type="SMR" id="Q9CAX8"/>
<dbReference type="FunCoup" id="Q9CAX8">
    <property type="interactions" value="800"/>
</dbReference>
<dbReference type="STRING" id="3702.Q9CAX8"/>
<dbReference type="iPTMnet" id="Q9CAX8"/>
<dbReference type="PaxDb" id="3702-AT3G11490.1"/>
<dbReference type="ProteomicsDB" id="236943"/>
<dbReference type="EnsemblPlants" id="AT3G11490.1">
    <property type="protein sequence ID" value="AT3G11490.1"/>
    <property type="gene ID" value="AT3G11490"/>
</dbReference>
<dbReference type="GeneID" id="820322"/>
<dbReference type="Gramene" id="AT3G11490.1">
    <property type="protein sequence ID" value="AT3G11490.1"/>
    <property type="gene ID" value="AT3G11490"/>
</dbReference>
<dbReference type="KEGG" id="ath:AT3G11490"/>
<dbReference type="Araport" id="AT3G11490"/>
<dbReference type="TAIR" id="AT3G11490">
    <property type="gene designation" value="ROPGAP4"/>
</dbReference>
<dbReference type="eggNOG" id="KOG4270">
    <property type="taxonomic scope" value="Eukaryota"/>
</dbReference>
<dbReference type="HOGENOM" id="CLU_031591_1_1_1"/>
<dbReference type="InParanoid" id="Q9CAX8"/>
<dbReference type="OMA" id="KFADSSC"/>
<dbReference type="OrthoDB" id="185175at2759"/>
<dbReference type="PhylomeDB" id="Q9CAX8"/>
<dbReference type="PRO" id="PR:Q9CAX8"/>
<dbReference type="Proteomes" id="UP000006548">
    <property type="component" value="Chromosome 3"/>
</dbReference>
<dbReference type="ExpressionAtlas" id="Q9CAX8">
    <property type="expression patterns" value="baseline and differential"/>
</dbReference>
<dbReference type="GO" id="GO:0005096">
    <property type="term" value="F:GTPase activator activity"/>
    <property type="evidence" value="ECO:0007669"/>
    <property type="project" value="UniProtKB-KW"/>
</dbReference>
<dbReference type="GO" id="GO:0009664">
    <property type="term" value="P:plant-type cell wall organization"/>
    <property type="evidence" value="ECO:0000315"/>
    <property type="project" value="TAIR"/>
</dbReference>
<dbReference type="GO" id="GO:0034059">
    <property type="term" value="P:response to anoxia"/>
    <property type="evidence" value="ECO:0000315"/>
    <property type="project" value="UniProtKB"/>
</dbReference>
<dbReference type="GO" id="GO:0007165">
    <property type="term" value="P:signal transduction"/>
    <property type="evidence" value="ECO:0007669"/>
    <property type="project" value="InterPro"/>
</dbReference>
<dbReference type="CDD" id="cd00132">
    <property type="entry name" value="CRIB"/>
    <property type="match status" value="1"/>
</dbReference>
<dbReference type="CDD" id="cd00159">
    <property type="entry name" value="RhoGAP"/>
    <property type="match status" value="1"/>
</dbReference>
<dbReference type="FunFam" id="1.10.555.10:FF:000046">
    <property type="entry name" value="Rho GTPase-activating protein 5"/>
    <property type="match status" value="1"/>
</dbReference>
<dbReference type="Gene3D" id="3.90.810.10">
    <property type="entry name" value="CRIB domain"/>
    <property type="match status" value="1"/>
</dbReference>
<dbReference type="Gene3D" id="1.10.555.10">
    <property type="entry name" value="Rho GTPase activation protein"/>
    <property type="match status" value="1"/>
</dbReference>
<dbReference type="InterPro" id="IPR000095">
    <property type="entry name" value="CRIB_dom"/>
</dbReference>
<dbReference type="InterPro" id="IPR036936">
    <property type="entry name" value="CRIB_dom_sf"/>
</dbReference>
<dbReference type="InterPro" id="IPR008936">
    <property type="entry name" value="Rho_GTPase_activation_prot"/>
</dbReference>
<dbReference type="InterPro" id="IPR000198">
    <property type="entry name" value="RhoGAP_dom"/>
</dbReference>
<dbReference type="InterPro" id="IPR044785">
    <property type="entry name" value="RopGAP1-5"/>
</dbReference>
<dbReference type="PANTHER" id="PTHR23177">
    <property type="entry name" value="MKIAA1688 PROTEIN"/>
    <property type="match status" value="1"/>
</dbReference>
<dbReference type="PANTHER" id="PTHR23177:SF65">
    <property type="entry name" value="RHO GTPASE-ACTIVATING PROTEIN 4"/>
    <property type="match status" value="1"/>
</dbReference>
<dbReference type="Pfam" id="PF00786">
    <property type="entry name" value="PBD"/>
    <property type="match status" value="1"/>
</dbReference>
<dbReference type="Pfam" id="PF00620">
    <property type="entry name" value="RhoGAP"/>
    <property type="match status" value="1"/>
</dbReference>
<dbReference type="SMART" id="SM00285">
    <property type="entry name" value="PBD"/>
    <property type="match status" value="1"/>
</dbReference>
<dbReference type="SMART" id="SM00324">
    <property type="entry name" value="RhoGAP"/>
    <property type="match status" value="1"/>
</dbReference>
<dbReference type="SUPFAM" id="SSF48350">
    <property type="entry name" value="GTPase activation domain, GAP"/>
    <property type="match status" value="1"/>
</dbReference>
<dbReference type="PROSITE" id="PS50108">
    <property type="entry name" value="CRIB"/>
    <property type="match status" value="1"/>
</dbReference>
<dbReference type="PROSITE" id="PS50238">
    <property type="entry name" value="RHOGAP"/>
    <property type="match status" value="1"/>
</dbReference>
<evidence type="ECO:0000255" key="1">
    <source>
        <dbReference type="PROSITE-ProRule" id="PRU00057"/>
    </source>
</evidence>
<evidence type="ECO:0000255" key="2">
    <source>
        <dbReference type="PROSITE-ProRule" id="PRU00172"/>
    </source>
</evidence>
<evidence type="ECO:0000256" key="3">
    <source>
        <dbReference type="SAM" id="MobiDB-lite"/>
    </source>
</evidence>
<evidence type="ECO:0000269" key="4">
    <source>
    </source>
</evidence>
<sequence>MAKVLKSSQSCHFPSPSSSSSTSCGGGNDGSNRDPHSPFNISRREEEEEEEERSEKERERFELSSALEILVSAIRRSVIGGCVGEEDLCSMEIGVPTDVRHVAHVTFDRFHGFLGLPVEFEPEVPRRAPSASATVFGVSTESMQLSYDTRGNIVPTILLMMQSHLYSRGGLRVEGIFRINGENGQEEYIREELNKGIIPDNIDVHCLASLIKAWFRELPSGVLDSLSPEQVMESESEDECVELVRLLPSTEASLLDWAINLMADVVEMEQLNKMNARNIAMVFAPNMTQMLDPLTALMYAVQVMNFLKTLIVKTLKDRKESRDKLVPASNPSPRDHNGDQSSSRQLLHLMKANKEETLDNFEAEMKDKEESADEEEEECAESVELVDIKKSSLVNNSSGGFGQKHIGWEEQRTMSKASSIVGRVNYRVELFEAWR</sequence>